<evidence type="ECO:0000250" key="1"/>
<evidence type="ECO:0000250" key="2">
    <source>
        <dbReference type="UniProtKB" id="O95760"/>
    </source>
</evidence>
<evidence type="ECO:0000250" key="3">
    <source>
        <dbReference type="UniProtKB" id="Q8BVZ5"/>
    </source>
</evidence>
<evidence type="ECO:0000256" key="4">
    <source>
        <dbReference type="SAM" id="MobiDB-lite"/>
    </source>
</evidence>
<evidence type="ECO:0000269" key="5">
    <source>
    </source>
</evidence>
<evidence type="ECO:0000305" key="6"/>
<organism>
    <name type="scientific">Canis lupus familiaris</name>
    <name type="common">Dog</name>
    <name type="synonym">Canis familiaris</name>
    <dbReference type="NCBI Taxonomy" id="9615"/>
    <lineage>
        <taxon>Eukaryota</taxon>
        <taxon>Metazoa</taxon>
        <taxon>Chordata</taxon>
        <taxon>Craniata</taxon>
        <taxon>Vertebrata</taxon>
        <taxon>Euteleostomi</taxon>
        <taxon>Mammalia</taxon>
        <taxon>Eutheria</taxon>
        <taxon>Laurasiatheria</taxon>
        <taxon>Carnivora</taxon>
        <taxon>Caniformia</taxon>
        <taxon>Canidae</taxon>
        <taxon>Canis</taxon>
    </lineage>
</organism>
<protein>
    <recommendedName>
        <fullName>Interleukin-33</fullName>
        <shortName>IL-33</shortName>
    </recommendedName>
    <alternativeName>
        <fullName>Protein DVS27</fullName>
    </alternativeName>
</protein>
<feature type="chain" id="PRO_0000096789" description="Interleukin-33">
    <location>
        <begin position="1"/>
        <end position="263"/>
    </location>
</feature>
<feature type="propeptide" id="PRO_0000430082">
    <location>
        <begin position="1"/>
        <end status="unknown"/>
    </location>
</feature>
<feature type="region of interest" description="Homeodomain-like HTH domain" evidence="2">
    <location>
        <begin position="1"/>
        <end position="65"/>
    </location>
</feature>
<feature type="region of interest" description="Disordered" evidence="4">
    <location>
        <begin position="1"/>
        <end position="28"/>
    </location>
</feature>
<feature type="region of interest" description="Interaction with RELA" evidence="3">
    <location>
        <begin position="62"/>
        <end position="103"/>
    </location>
</feature>
<feature type="compositionally biased region" description="Polar residues" evidence="4">
    <location>
        <begin position="1"/>
        <end position="17"/>
    </location>
</feature>
<feature type="site" description="Cleavage; by ELANE" evidence="3">
    <location>
        <begin position="103"/>
        <end position="104"/>
    </location>
</feature>
<keyword id="KW-0158">Chromosome</keyword>
<keyword id="KW-0202">Cytokine</keyword>
<keyword id="KW-0963">Cytoplasm</keyword>
<keyword id="KW-0968">Cytoplasmic vesicle</keyword>
<keyword id="KW-0539">Nucleus</keyword>
<keyword id="KW-1185">Reference proteome</keyword>
<keyword id="KW-0964">Secreted</keyword>
<keyword id="KW-0804">Transcription</keyword>
<accession>O97863</accession>
<name>IL33_CANLF</name>
<proteinExistence type="evidence at transcript level"/>
<comment type="function">
    <text evidence="2 3">Cytokine that binds to and signals through the IL1RL1/ST2 receptor which in turn activates NF-kappa-B and MAPK signaling pathways in target cells. Involved in the maturation of Th2 cells inducing the secretion of T-helper type 2-associated cytokines. Also involved in activation of mast cells, basophils, eosinophils and natural killer cells. Acts as a chemoattractant for Th2 cells, and may function as an 'alarmin', that amplifies immune responses during tissue injury (By similarity). Induces rapid UCP2-dependent mitochondrial rewiring that attenuates the generation of reactive oxygen species and preserves the integrity of Krebs cycle required for persistent production of itaconate and subsequent GATA3-dependent differentiation of inflammation-resolving alternatively activated macrophages (By similarity).</text>
</comment>
<comment type="function">
    <text evidence="1">In quiescent endothelia the uncleaved form is constitutively and abundantly expressed, and acts as a chromatin-associated nuclear factor with transcriptional repressor properties, it may sequester nuclear NF-kappaB/RELA, lowering expression of its targets. This form is rapidely lost upon angiogenic or pro-inflammatory activation (By similarity).</text>
</comment>
<comment type="subunit">
    <text evidence="2">Forms a 1:1:1 heterotrimeric complex with its primary high-affinity receptor IL1RL1 and the coreceptor IL1RAP. Interacts with cargo receptor TMED10; the interaction mediates the translocation from the cytoplasm into the ERGIC (endoplasmic reticulum-Golgi intermediate compartment) and thereby secretion.</text>
</comment>
<comment type="subcellular location">
    <subcellularLocation>
        <location evidence="5">Nucleus</location>
    </subcellularLocation>
    <subcellularLocation>
        <location evidence="2">Chromosome</location>
    </subcellularLocation>
    <subcellularLocation>
        <location evidence="2">Cytoplasm</location>
    </subcellularLocation>
    <subcellularLocation>
        <location evidence="2">Cytoplasmic vesicle</location>
        <location evidence="2">Secretory vesicle</location>
    </subcellularLocation>
    <subcellularLocation>
        <location evidence="2">Secreted</location>
    </subcellularLocation>
    <text evidence="2">Associates with heterochromatin and mitotic chromosomes. The secretion is dependent on protein unfolding and facilitated by the cargo receptor TMED10; it results in protein translocation from the cytoplasm into the ERGIC (endoplasmic reticulum-Golgi intermediate compartment) followed by vesicle entry and secretion.</text>
</comment>
<comment type="tissue specificity">
    <text evidence="5">Expressed in cultured umbilical artery smooth muscle cells after stimulation with IL1A and IL1B, and to a lesser extent with IFNG. Expressed in vasospastic cerebral arteries after subarachnoid hemorrhage.</text>
</comment>
<comment type="domain">
    <text evidence="1">The homeodomain-like HTH domain mediates nuclear localization and heterochromatin association.</text>
</comment>
<comment type="PTM">
    <text evidence="1">The full-length protein can be released from cells and is able to signal via the IL1RL1/ST2 receptor. However, proteolytic processing by CELA1, CSTG/cathepsin G and ELANE/neutrophil elastase produces C-terminal peptides that are more active than the unprocessed full-length protein. May also be proteolytically processed by calpains. Proteolytic cleavage mediated by apoptotic caspases including CASP3 and CASP7 results in IL33 inactivation. In vitro proteolytic cleavage by CASP1 was reported but could not be confirmed in vivo suggesting that IL33 is probably not a direct substrate for that caspase (By similarity).</text>
</comment>
<comment type="similarity">
    <text evidence="6">Belongs to the IL-1 family. Highly divergent.</text>
</comment>
<gene>
    <name type="primary">IL33</name>
</gene>
<sequence length="263" mass="30179">MKYSTTKIPPAKMNSSADKALVKSPKLRKSQQKPEGVCQMYFMQLRSGLIIEKTSCYFRKEITKRYSPRTAEKCRKQCLVFTACHQQLNKDFTSDVPMLQKCFGRANVPSIQEYSASLSTYNDQSITFVFEDGSYEIYVEDLRKGQEKDKVLFRYYDSQSPSHETGDDVDGQTLLVNLSPTKDKDFLLHANNEEHSVELQKCENQLPDQAFFLLHRKSSECVSFECKNNPGVFIGVKDNHLALIKVGDQTKDSYIEKTIFKLS</sequence>
<reference key="1">
    <citation type="journal article" date="1999" name="J. Cereb. Blood Flow Metab.">
        <title>Identification of genes differentially expressed in canine vasospastic cerebral arteries after subarachnoid hemorrhage.</title>
        <authorList>
            <person name="Onda H."/>
            <person name="Kasuya H."/>
            <person name="Takakura K."/>
            <person name="Hori T."/>
            <person name="Imaizumi T."/>
            <person name="Takeuchi T."/>
            <person name="Inoue I."/>
            <person name="Takeda J."/>
        </authorList>
    </citation>
    <scope>NUCLEOTIDE SEQUENCE [MRNA]</scope>
    <scope>TISSUE SPECIFICITY</scope>
    <scope>SUBCELLULAR LOCATION</scope>
    <source>
        <tissue>Cerebral artery</tissue>
    </source>
</reference>
<dbReference type="EMBL" id="AB024517">
    <property type="protein sequence ID" value="BAA75891.1"/>
    <property type="molecule type" value="mRNA"/>
</dbReference>
<dbReference type="RefSeq" id="NP_001003180.1">
    <property type="nucleotide sequence ID" value="NM_001003180.1"/>
</dbReference>
<dbReference type="SMR" id="O97863"/>
<dbReference type="FunCoup" id="O97863">
    <property type="interactions" value="39"/>
</dbReference>
<dbReference type="STRING" id="9615.ENSCAFP00000001950"/>
<dbReference type="PaxDb" id="9615-ENSCAFP00000001950"/>
<dbReference type="Ensembl" id="ENSCAFT00040018732.1">
    <property type="protein sequence ID" value="ENSCAFP00040016253.1"/>
    <property type="gene ID" value="ENSCAFG00040010108.1"/>
</dbReference>
<dbReference type="GeneID" id="403810"/>
<dbReference type="KEGG" id="cfa:403810"/>
<dbReference type="CTD" id="90865"/>
<dbReference type="InParanoid" id="O97863"/>
<dbReference type="OrthoDB" id="9836513at2759"/>
<dbReference type="Reactome" id="R-CFA-1257604">
    <property type="pathway name" value="PIP3 activates AKT signaling"/>
</dbReference>
<dbReference type="Reactome" id="R-CFA-5689880">
    <property type="pathway name" value="Ub-specific processing proteases"/>
</dbReference>
<dbReference type="Reactome" id="R-CFA-6811558">
    <property type="pathway name" value="PI5P, PP2A and IER3 Regulate PI3K/AKT Signaling"/>
</dbReference>
<dbReference type="Proteomes" id="UP000002254">
    <property type="component" value="Unplaced"/>
</dbReference>
<dbReference type="Proteomes" id="UP000694429">
    <property type="component" value="Unplaced"/>
</dbReference>
<dbReference type="Proteomes" id="UP000694542">
    <property type="component" value="Chromosome 11"/>
</dbReference>
<dbReference type="Proteomes" id="UP000805418">
    <property type="component" value="Unplaced"/>
</dbReference>
<dbReference type="GO" id="GO:0005694">
    <property type="term" value="C:chromosome"/>
    <property type="evidence" value="ECO:0007669"/>
    <property type="project" value="UniProtKB-SubCell"/>
</dbReference>
<dbReference type="GO" id="GO:0005615">
    <property type="term" value="C:extracellular space"/>
    <property type="evidence" value="ECO:0007669"/>
    <property type="project" value="UniProtKB-KW"/>
</dbReference>
<dbReference type="GO" id="GO:0005634">
    <property type="term" value="C:nucleus"/>
    <property type="evidence" value="ECO:0007669"/>
    <property type="project" value="UniProtKB-SubCell"/>
</dbReference>
<dbReference type="GO" id="GO:0030133">
    <property type="term" value="C:transport vesicle"/>
    <property type="evidence" value="ECO:0007669"/>
    <property type="project" value="UniProtKB-SubCell"/>
</dbReference>
<dbReference type="GO" id="GO:0005125">
    <property type="term" value="F:cytokine activity"/>
    <property type="evidence" value="ECO:0000318"/>
    <property type="project" value="GO_Central"/>
</dbReference>
<dbReference type="GO" id="GO:0030225">
    <property type="term" value="P:macrophage differentiation"/>
    <property type="evidence" value="ECO:0000250"/>
    <property type="project" value="UniProtKB"/>
</dbReference>
<dbReference type="GO" id="GO:0001819">
    <property type="term" value="P:positive regulation of cytokine production"/>
    <property type="evidence" value="ECO:0000318"/>
    <property type="project" value="GO_Central"/>
</dbReference>
<dbReference type="GO" id="GO:0050729">
    <property type="term" value="P:positive regulation of inflammatory response"/>
    <property type="evidence" value="ECO:0000318"/>
    <property type="project" value="GO_Central"/>
</dbReference>
<dbReference type="CDD" id="cd23299">
    <property type="entry name" value="beta-trefoil_IL33"/>
    <property type="match status" value="1"/>
</dbReference>
<dbReference type="FunFam" id="2.80.10.50:FF:000052">
    <property type="entry name" value="Interleukin 33"/>
    <property type="match status" value="1"/>
</dbReference>
<dbReference type="Gene3D" id="2.80.10.50">
    <property type="match status" value="1"/>
</dbReference>
<dbReference type="InterPro" id="IPR026145">
    <property type="entry name" value="IL-33"/>
</dbReference>
<dbReference type="InterPro" id="IPR053902">
    <property type="entry name" value="IL33_C"/>
</dbReference>
<dbReference type="PANTHER" id="PTHR21114">
    <property type="entry name" value="DVS27 PROTEIN"/>
    <property type="match status" value="1"/>
</dbReference>
<dbReference type="PANTHER" id="PTHR21114:SF0">
    <property type="entry name" value="INTERLEUKIN-33"/>
    <property type="match status" value="1"/>
</dbReference>
<dbReference type="Pfam" id="PF15095">
    <property type="entry name" value="IL33_bt"/>
    <property type="match status" value="1"/>
</dbReference>